<feature type="chain" id="PRO_0000069997" description="Oxytocin receptor">
    <location>
        <begin position="1"/>
        <end position="391"/>
    </location>
</feature>
<feature type="topological domain" description="Extracellular" evidence="2">
    <location>
        <begin position="1"/>
        <end position="38"/>
    </location>
</feature>
<feature type="transmembrane region" description="Helical; Name=1" evidence="2">
    <location>
        <begin position="39"/>
        <end position="63"/>
    </location>
</feature>
<feature type="topological domain" description="Cytoplasmic" evidence="2">
    <location>
        <begin position="64"/>
        <end position="74"/>
    </location>
</feature>
<feature type="transmembrane region" description="Helical; Name=2" evidence="2">
    <location>
        <begin position="75"/>
        <end position="97"/>
    </location>
</feature>
<feature type="topological domain" description="Extracellular" evidence="2">
    <location>
        <begin position="98"/>
        <end position="113"/>
    </location>
</feature>
<feature type="transmembrane region" description="Helical; Name=3" evidence="2">
    <location>
        <begin position="114"/>
        <end position="135"/>
    </location>
</feature>
<feature type="topological domain" description="Cytoplasmic" evidence="2">
    <location>
        <begin position="136"/>
        <end position="154"/>
    </location>
</feature>
<feature type="transmembrane region" description="Helical; Name=4" evidence="2">
    <location>
        <begin position="155"/>
        <end position="175"/>
    </location>
</feature>
<feature type="topological domain" description="Extracellular" evidence="2">
    <location>
        <begin position="176"/>
        <end position="202"/>
    </location>
</feature>
<feature type="transmembrane region" description="Helical; Name=5" evidence="2">
    <location>
        <begin position="203"/>
        <end position="225"/>
    </location>
</feature>
<feature type="topological domain" description="Cytoplasmic" evidence="2">
    <location>
        <begin position="226"/>
        <end position="277"/>
    </location>
</feature>
<feature type="transmembrane region" description="Helical; Name=6" evidence="2">
    <location>
        <begin position="278"/>
        <end position="296"/>
    </location>
</feature>
<feature type="topological domain" description="Extracellular" evidence="2">
    <location>
        <begin position="297"/>
        <end position="311"/>
    </location>
</feature>
<feature type="transmembrane region" description="Helical; Name=7" evidence="2">
    <location>
        <begin position="312"/>
        <end position="334"/>
    </location>
</feature>
<feature type="topological domain" description="Cytoplasmic" evidence="2">
    <location>
        <begin position="335"/>
        <end position="391"/>
    </location>
</feature>
<feature type="modified residue" description="Phosphoserine" evidence="1">
    <location>
        <position position="368"/>
    </location>
</feature>
<feature type="modified residue" description="Phosphoserine" evidence="1">
    <location>
        <position position="370"/>
    </location>
</feature>
<feature type="glycosylation site" description="N-linked (GlcNAc...) asparagine" evidence="2">
    <location>
        <position position="8"/>
    </location>
</feature>
<feature type="glycosylation site" description="N-linked (GlcNAc...) asparagine" evidence="2">
    <location>
        <position position="15"/>
    </location>
</feature>
<feature type="glycosylation site" description="N-linked (GlcNAc...) asparagine" evidence="2">
    <location>
        <position position="26"/>
    </location>
</feature>
<feature type="disulfide bond" evidence="3">
    <location>
        <begin position="112"/>
        <end position="187"/>
    </location>
</feature>
<protein>
    <recommendedName>
        <fullName>Oxytocin receptor</fullName>
        <shortName>OT-R</shortName>
    </recommendedName>
</protein>
<reference key="1">
    <citation type="journal article" date="1995" name="DNA Cell Biol.">
        <title>Structure and expression of the bovine oxytocin receptor gene.</title>
        <authorList>
            <person name="Bathgate R."/>
            <person name="Rust W."/>
            <person name="Balvers M."/>
            <person name="Hartung S."/>
            <person name="Morley S."/>
            <person name="Ivell R."/>
        </authorList>
    </citation>
    <scope>NUCLEOTIDE SEQUENCE [MRNA]</scope>
</reference>
<name>OXYR_BOVIN</name>
<evidence type="ECO:0000250" key="1">
    <source>
        <dbReference type="UniProtKB" id="P70536"/>
    </source>
</evidence>
<evidence type="ECO:0000255" key="2"/>
<evidence type="ECO:0000255" key="3">
    <source>
        <dbReference type="PROSITE-ProRule" id="PRU00521"/>
    </source>
</evidence>
<gene>
    <name type="primary">OXTR</name>
</gene>
<keyword id="KW-1003">Cell membrane</keyword>
<keyword id="KW-1015">Disulfide bond</keyword>
<keyword id="KW-0297">G-protein coupled receptor</keyword>
<keyword id="KW-0325">Glycoprotein</keyword>
<keyword id="KW-0472">Membrane</keyword>
<keyword id="KW-0597">Phosphoprotein</keyword>
<keyword id="KW-0675">Receptor</keyword>
<keyword id="KW-1185">Reference proteome</keyword>
<keyword id="KW-0807">Transducer</keyword>
<keyword id="KW-0812">Transmembrane</keyword>
<keyword id="KW-1133">Transmembrane helix</keyword>
<accession>P56449</accession>
<sequence>MEGAFAANWSAEAVNGSAAPPGTEGNRTAGPPQRNEALARVEVAVLCLILFLALSGNACVLLALRTTRHKHSRLFFFMKHLSIADLVVAVFQVLPQLLWDITFRFYGPDLLCRLVKYLQVVGMFASTYLLLLMSLDRCLAICQPLRSLSRRTDRLAVLVTWLGCLVASAPQVHIFSLREVADGVFDCWAVFIQPWGPKAYITWITLAVYIVPVIVLATCYGLISFKIWQNLRLKTAAAAAEAAAGAEGEAADWAGRAILARVSNVKLISKAKIRTVKMTFIVVLAFIVCWTPFFFVQMWSVWDADAPKEASPFIIAMLLASLNSCCNPWIYMLFTGHLFQELVQRFLCCSFRRLKGSRPGETSVSKKSNSSTFVLSQYSSSQRRCSQPSTL</sequence>
<proteinExistence type="evidence at transcript level"/>
<dbReference type="EMBL" id="AF101724">
    <property type="protein sequence ID" value="AAC70786.1"/>
    <property type="molecule type" value="mRNA"/>
</dbReference>
<dbReference type="RefSeq" id="NP_776559.1">
    <property type="nucleotide sequence ID" value="NM_174134.2"/>
</dbReference>
<dbReference type="SMR" id="P56449"/>
<dbReference type="FunCoup" id="P56449">
    <property type="interactions" value="261"/>
</dbReference>
<dbReference type="STRING" id="9913.ENSBTAP00000026346"/>
<dbReference type="GlyCosmos" id="P56449">
    <property type="glycosylation" value="3 sites, No reported glycans"/>
</dbReference>
<dbReference type="GlyGen" id="P56449">
    <property type="glycosylation" value="3 sites"/>
</dbReference>
<dbReference type="PaxDb" id="9913-ENSBTAP00000026346"/>
<dbReference type="GeneID" id="281371"/>
<dbReference type="KEGG" id="bta:281371"/>
<dbReference type="CTD" id="5021"/>
<dbReference type="VEuPathDB" id="HostDB:ENSBTAG00000019772"/>
<dbReference type="eggNOG" id="KOG3656">
    <property type="taxonomic scope" value="Eukaryota"/>
</dbReference>
<dbReference type="HOGENOM" id="CLU_009579_15_3_1"/>
<dbReference type="InParanoid" id="P56449"/>
<dbReference type="OMA" id="RCFFCCC"/>
<dbReference type="OrthoDB" id="6435638at2759"/>
<dbReference type="TreeFam" id="TF106499"/>
<dbReference type="Reactome" id="R-BTA-388479">
    <property type="pathway name" value="Vasopressin-like receptors"/>
</dbReference>
<dbReference type="Reactome" id="R-BTA-416476">
    <property type="pathway name" value="G alpha (q) signalling events"/>
</dbReference>
<dbReference type="Proteomes" id="UP000009136">
    <property type="component" value="Chromosome 22"/>
</dbReference>
<dbReference type="Bgee" id="ENSBTAG00000019772">
    <property type="expression patterns" value="Expressed in myometrium and 49 other cell types or tissues"/>
</dbReference>
<dbReference type="GO" id="GO:0005886">
    <property type="term" value="C:plasma membrane"/>
    <property type="evidence" value="ECO:0000318"/>
    <property type="project" value="GO_Central"/>
</dbReference>
<dbReference type="GO" id="GO:0004990">
    <property type="term" value="F:oxytocin receptor activity"/>
    <property type="evidence" value="ECO:0000318"/>
    <property type="project" value="GO_Central"/>
</dbReference>
<dbReference type="GO" id="GO:0005000">
    <property type="term" value="F:vasopressin receptor activity"/>
    <property type="evidence" value="ECO:0000318"/>
    <property type="project" value="GO_Central"/>
</dbReference>
<dbReference type="GO" id="GO:0032870">
    <property type="term" value="P:cellular response to hormone stimulus"/>
    <property type="evidence" value="ECO:0000318"/>
    <property type="project" value="GO_Central"/>
</dbReference>
<dbReference type="GO" id="GO:0007565">
    <property type="term" value="P:female pregnancy"/>
    <property type="evidence" value="ECO:0000318"/>
    <property type="project" value="GO_Central"/>
</dbReference>
<dbReference type="GO" id="GO:0007186">
    <property type="term" value="P:G protein-coupled receptor signaling pathway"/>
    <property type="evidence" value="ECO:0000318"/>
    <property type="project" value="GO_Central"/>
</dbReference>
<dbReference type="GO" id="GO:0060137">
    <property type="term" value="P:maternal process involved in parturition"/>
    <property type="evidence" value="ECO:0000318"/>
    <property type="project" value="GO_Central"/>
</dbReference>
<dbReference type="GO" id="GO:0045777">
    <property type="term" value="P:positive regulation of blood pressure"/>
    <property type="evidence" value="ECO:0007669"/>
    <property type="project" value="Ensembl"/>
</dbReference>
<dbReference type="GO" id="GO:0120162">
    <property type="term" value="P:positive regulation of cold-induced thermogenesis"/>
    <property type="evidence" value="ECO:0007669"/>
    <property type="project" value="Ensembl"/>
</dbReference>
<dbReference type="GO" id="GO:0045907">
    <property type="term" value="P:positive regulation of vasoconstriction"/>
    <property type="evidence" value="ECO:0000318"/>
    <property type="project" value="GO_Central"/>
</dbReference>
<dbReference type="GO" id="GO:0001992">
    <property type="term" value="P:regulation of systemic arterial blood pressure by vasopressin"/>
    <property type="evidence" value="ECO:0000318"/>
    <property type="project" value="GO_Central"/>
</dbReference>
<dbReference type="CDD" id="cd15387">
    <property type="entry name" value="7tmA_OT_R"/>
    <property type="match status" value="1"/>
</dbReference>
<dbReference type="FunFam" id="1.20.1070.10:FF:000145">
    <property type="entry name" value="Oxytocin receptor"/>
    <property type="match status" value="1"/>
</dbReference>
<dbReference type="Gene3D" id="1.20.1070.10">
    <property type="entry name" value="Rhodopsin 7-helix transmembrane proteins"/>
    <property type="match status" value="1"/>
</dbReference>
<dbReference type="InterPro" id="IPR000276">
    <property type="entry name" value="GPCR_Rhodpsn"/>
</dbReference>
<dbReference type="InterPro" id="IPR017452">
    <property type="entry name" value="GPCR_Rhodpsn_7TM"/>
</dbReference>
<dbReference type="InterPro" id="IPR002062">
    <property type="entry name" value="Oxytocn_rcpt"/>
</dbReference>
<dbReference type="InterPro" id="IPR001817">
    <property type="entry name" value="Vasoprsn_rcpt"/>
</dbReference>
<dbReference type="PANTHER" id="PTHR24241">
    <property type="entry name" value="NEUROPEPTIDE RECEPTOR-RELATED G-PROTEIN COUPLED RECEPTOR"/>
    <property type="match status" value="1"/>
</dbReference>
<dbReference type="PANTHER" id="PTHR24241:SF89">
    <property type="entry name" value="OXYTOCIN RECEPTOR"/>
    <property type="match status" value="1"/>
</dbReference>
<dbReference type="Pfam" id="PF00001">
    <property type="entry name" value="7tm_1"/>
    <property type="match status" value="1"/>
</dbReference>
<dbReference type="PRINTS" id="PR00237">
    <property type="entry name" value="GPCRRHODOPSN"/>
</dbReference>
<dbReference type="PRINTS" id="PR00665">
    <property type="entry name" value="OXYTOCINR"/>
</dbReference>
<dbReference type="PRINTS" id="PR00896">
    <property type="entry name" value="VASOPRESSINR"/>
</dbReference>
<dbReference type="SUPFAM" id="SSF81321">
    <property type="entry name" value="Family A G protein-coupled receptor-like"/>
    <property type="match status" value="1"/>
</dbReference>
<dbReference type="PROSITE" id="PS00237">
    <property type="entry name" value="G_PROTEIN_RECEP_F1_1"/>
    <property type="match status" value="1"/>
</dbReference>
<dbReference type="PROSITE" id="PS50262">
    <property type="entry name" value="G_PROTEIN_RECEP_F1_2"/>
    <property type="match status" value="1"/>
</dbReference>
<organism>
    <name type="scientific">Bos taurus</name>
    <name type="common">Bovine</name>
    <dbReference type="NCBI Taxonomy" id="9913"/>
    <lineage>
        <taxon>Eukaryota</taxon>
        <taxon>Metazoa</taxon>
        <taxon>Chordata</taxon>
        <taxon>Craniata</taxon>
        <taxon>Vertebrata</taxon>
        <taxon>Euteleostomi</taxon>
        <taxon>Mammalia</taxon>
        <taxon>Eutheria</taxon>
        <taxon>Laurasiatheria</taxon>
        <taxon>Artiodactyla</taxon>
        <taxon>Ruminantia</taxon>
        <taxon>Pecora</taxon>
        <taxon>Bovidae</taxon>
        <taxon>Bovinae</taxon>
        <taxon>Bos</taxon>
    </lineage>
</organism>
<comment type="function">
    <text>Receptor for oxytocin. The activity of this receptor is mediated by G proteins which activate a phosphatidylinositol-calcium second messenger system.</text>
</comment>
<comment type="subcellular location">
    <subcellularLocation>
        <location>Cell membrane</location>
        <topology>Multi-pass membrane protein</topology>
    </subcellularLocation>
</comment>
<comment type="similarity">
    <text evidence="3">Belongs to the G-protein coupled receptor 1 family. Vasopressin/oxytocin receptor subfamily.</text>
</comment>